<accession>P9WPW7</accession>
<accession>L0TA96</accession>
<accession>P63642</accession>
<accession>P94993</accession>
<sequence length="398" mass="43682">MSERVILAYSGGLDTSVAISWIGKETGREVVAVAIDLGQGGEHMDVIRQRALDCGAVEAVVVDARDEFAEGYCLPTVLNNALYMDRYPLVSAISRPLIVKHLVAAAREHGGGIVAHGCTGKGNDQVRFEVGFASLAPDLEVLAPVRDYAWTREKAIAFAEENAIPINVTKRSPFSIDQNVWGRAVETGFLEHLWNAPTKDIYAYTEDPTINWGVPDEVIVGFERGVPVSVDGKPVSMLAAIEELNRRAGAQGVGRLDVVEDRLVGIKSREIYEAPGAMVLITAHTELEHVTLERELGRFKRQTDQRWAELVYDGLWYSPLKAALEAFVAKTQEHVSGEVRLVLHGGHIAVNGRRSAESLYDFNLATYDEGDSFDQSAARGFVYVHGLSSKLAARRDLR</sequence>
<gene>
    <name evidence="1" type="primary">argG</name>
    <name type="ordered locus">Rv1658</name>
    <name type="ORF">MTCY06H11.23</name>
</gene>
<dbReference type="EC" id="6.3.4.5" evidence="1"/>
<dbReference type="EMBL" id="AL123456">
    <property type="protein sequence ID" value="CCP44423.1"/>
    <property type="molecule type" value="Genomic_DNA"/>
</dbReference>
<dbReference type="PIR" id="E70621">
    <property type="entry name" value="E70621"/>
</dbReference>
<dbReference type="RefSeq" id="NP_216174.1">
    <property type="nucleotide sequence ID" value="NC_000962.3"/>
</dbReference>
<dbReference type="RefSeq" id="WP_003408179.1">
    <property type="nucleotide sequence ID" value="NZ_NVQJ01000069.1"/>
</dbReference>
<dbReference type="SMR" id="P9WPW7"/>
<dbReference type="FunCoup" id="P9WPW7">
    <property type="interactions" value="427"/>
</dbReference>
<dbReference type="STRING" id="83332.Rv1658"/>
<dbReference type="PaxDb" id="83332-Rv1658"/>
<dbReference type="DNASU" id="885645"/>
<dbReference type="GeneID" id="885645"/>
<dbReference type="KEGG" id="mtu:Rv1658"/>
<dbReference type="KEGG" id="mtv:RVBD_1658"/>
<dbReference type="TubercuList" id="Rv1658"/>
<dbReference type="eggNOG" id="COG0137">
    <property type="taxonomic scope" value="Bacteria"/>
</dbReference>
<dbReference type="InParanoid" id="P9WPW7"/>
<dbReference type="OrthoDB" id="9801641at2"/>
<dbReference type="PhylomeDB" id="P9WPW7"/>
<dbReference type="UniPathway" id="UPA00068">
    <property type="reaction ID" value="UER00113"/>
</dbReference>
<dbReference type="Proteomes" id="UP000001584">
    <property type="component" value="Chromosome"/>
</dbReference>
<dbReference type="GO" id="GO:0005737">
    <property type="term" value="C:cytoplasm"/>
    <property type="evidence" value="ECO:0000318"/>
    <property type="project" value="GO_Central"/>
</dbReference>
<dbReference type="GO" id="GO:0005829">
    <property type="term" value="C:cytosol"/>
    <property type="evidence" value="ECO:0007005"/>
    <property type="project" value="MTBBASE"/>
</dbReference>
<dbReference type="GO" id="GO:0005886">
    <property type="term" value="C:plasma membrane"/>
    <property type="evidence" value="ECO:0007005"/>
    <property type="project" value="MTBBASE"/>
</dbReference>
<dbReference type="GO" id="GO:0004055">
    <property type="term" value="F:argininosuccinate synthase activity"/>
    <property type="evidence" value="ECO:0000318"/>
    <property type="project" value="GO_Central"/>
</dbReference>
<dbReference type="GO" id="GO:0005524">
    <property type="term" value="F:ATP binding"/>
    <property type="evidence" value="ECO:0007669"/>
    <property type="project" value="UniProtKB-UniRule"/>
</dbReference>
<dbReference type="GO" id="GO:0000053">
    <property type="term" value="P:argininosuccinate metabolic process"/>
    <property type="evidence" value="ECO:0000318"/>
    <property type="project" value="GO_Central"/>
</dbReference>
<dbReference type="GO" id="GO:0006526">
    <property type="term" value="P:L-arginine biosynthetic process"/>
    <property type="evidence" value="ECO:0000318"/>
    <property type="project" value="GO_Central"/>
</dbReference>
<dbReference type="GO" id="GO:0000050">
    <property type="term" value="P:urea cycle"/>
    <property type="evidence" value="ECO:0000318"/>
    <property type="project" value="GO_Central"/>
</dbReference>
<dbReference type="CDD" id="cd01999">
    <property type="entry name" value="ASS"/>
    <property type="match status" value="1"/>
</dbReference>
<dbReference type="FunFam" id="3.40.50.620:FF:000038">
    <property type="entry name" value="Argininosuccinate synthase"/>
    <property type="match status" value="1"/>
</dbReference>
<dbReference type="FunFam" id="3.90.1260.10:FF:000006">
    <property type="entry name" value="Argininosuccinate synthase"/>
    <property type="match status" value="1"/>
</dbReference>
<dbReference type="Gene3D" id="3.90.1260.10">
    <property type="entry name" value="Argininosuccinate synthetase, chain A, domain 2"/>
    <property type="match status" value="1"/>
</dbReference>
<dbReference type="Gene3D" id="3.40.50.620">
    <property type="entry name" value="HUPs"/>
    <property type="match status" value="1"/>
</dbReference>
<dbReference type="Gene3D" id="1.20.5.470">
    <property type="entry name" value="Single helix bin"/>
    <property type="match status" value="1"/>
</dbReference>
<dbReference type="HAMAP" id="MF_00005">
    <property type="entry name" value="Arg_succ_synth_type1"/>
    <property type="match status" value="1"/>
</dbReference>
<dbReference type="InterPro" id="IPR048268">
    <property type="entry name" value="Arginosuc_syn_C"/>
</dbReference>
<dbReference type="InterPro" id="IPR048267">
    <property type="entry name" value="Arginosuc_syn_N"/>
</dbReference>
<dbReference type="InterPro" id="IPR001518">
    <property type="entry name" value="Arginosuc_synth"/>
</dbReference>
<dbReference type="InterPro" id="IPR018223">
    <property type="entry name" value="Arginosuc_synth_CS"/>
</dbReference>
<dbReference type="InterPro" id="IPR023434">
    <property type="entry name" value="Arginosuc_synth_type_1_subfam"/>
</dbReference>
<dbReference type="InterPro" id="IPR024074">
    <property type="entry name" value="AS_cat/multimer_dom_body"/>
</dbReference>
<dbReference type="InterPro" id="IPR014729">
    <property type="entry name" value="Rossmann-like_a/b/a_fold"/>
</dbReference>
<dbReference type="NCBIfam" id="TIGR00032">
    <property type="entry name" value="argG"/>
    <property type="match status" value="1"/>
</dbReference>
<dbReference type="NCBIfam" id="NF001770">
    <property type="entry name" value="PRK00509.1"/>
    <property type="match status" value="1"/>
</dbReference>
<dbReference type="PANTHER" id="PTHR11587">
    <property type="entry name" value="ARGININOSUCCINATE SYNTHASE"/>
    <property type="match status" value="1"/>
</dbReference>
<dbReference type="PANTHER" id="PTHR11587:SF2">
    <property type="entry name" value="ARGININOSUCCINATE SYNTHASE"/>
    <property type="match status" value="1"/>
</dbReference>
<dbReference type="Pfam" id="PF20979">
    <property type="entry name" value="Arginosuc_syn_C"/>
    <property type="match status" value="1"/>
</dbReference>
<dbReference type="Pfam" id="PF00764">
    <property type="entry name" value="Arginosuc_synth"/>
    <property type="match status" value="1"/>
</dbReference>
<dbReference type="SUPFAM" id="SSF52402">
    <property type="entry name" value="Adenine nucleotide alpha hydrolases-like"/>
    <property type="match status" value="1"/>
</dbReference>
<dbReference type="SUPFAM" id="SSF69864">
    <property type="entry name" value="Argininosuccinate synthetase, C-terminal domain"/>
    <property type="match status" value="1"/>
</dbReference>
<dbReference type="PROSITE" id="PS00564">
    <property type="entry name" value="ARGININOSUCCIN_SYN_1"/>
    <property type="match status" value="1"/>
</dbReference>
<dbReference type="PROSITE" id="PS00565">
    <property type="entry name" value="ARGININOSUCCIN_SYN_2"/>
    <property type="match status" value="1"/>
</dbReference>
<name>ASSY_MYCTU</name>
<protein>
    <recommendedName>
        <fullName evidence="1">Argininosuccinate synthase</fullName>
        <ecNumber evidence="1">6.3.4.5</ecNumber>
    </recommendedName>
    <alternativeName>
        <fullName evidence="1">Citrulline--aspartate ligase</fullName>
    </alternativeName>
</protein>
<keyword id="KW-0028">Amino-acid biosynthesis</keyword>
<keyword id="KW-0055">Arginine biosynthesis</keyword>
<keyword id="KW-0067">ATP-binding</keyword>
<keyword id="KW-0963">Cytoplasm</keyword>
<keyword id="KW-0436">Ligase</keyword>
<keyword id="KW-0547">Nucleotide-binding</keyword>
<keyword id="KW-1185">Reference proteome</keyword>
<reference key="1">
    <citation type="journal article" date="1998" name="Nature">
        <title>Deciphering the biology of Mycobacterium tuberculosis from the complete genome sequence.</title>
        <authorList>
            <person name="Cole S.T."/>
            <person name="Brosch R."/>
            <person name="Parkhill J."/>
            <person name="Garnier T."/>
            <person name="Churcher C.M."/>
            <person name="Harris D.E."/>
            <person name="Gordon S.V."/>
            <person name="Eiglmeier K."/>
            <person name="Gas S."/>
            <person name="Barry C.E. III"/>
            <person name="Tekaia F."/>
            <person name="Badcock K."/>
            <person name="Basham D."/>
            <person name="Brown D."/>
            <person name="Chillingworth T."/>
            <person name="Connor R."/>
            <person name="Davies R.M."/>
            <person name="Devlin K."/>
            <person name="Feltwell T."/>
            <person name="Gentles S."/>
            <person name="Hamlin N."/>
            <person name="Holroyd S."/>
            <person name="Hornsby T."/>
            <person name="Jagels K."/>
            <person name="Krogh A."/>
            <person name="McLean J."/>
            <person name="Moule S."/>
            <person name="Murphy L.D."/>
            <person name="Oliver S."/>
            <person name="Osborne J."/>
            <person name="Quail M.A."/>
            <person name="Rajandream M.A."/>
            <person name="Rogers J."/>
            <person name="Rutter S."/>
            <person name="Seeger K."/>
            <person name="Skelton S."/>
            <person name="Squares S."/>
            <person name="Squares R."/>
            <person name="Sulston J.E."/>
            <person name="Taylor K."/>
            <person name="Whitehead S."/>
            <person name="Barrell B.G."/>
        </authorList>
    </citation>
    <scope>NUCLEOTIDE SEQUENCE [LARGE SCALE GENOMIC DNA]</scope>
    <source>
        <strain>ATCC 25618 / H37Rv</strain>
    </source>
</reference>
<reference key="2">
    <citation type="journal article" date="2011" name="Mol. Cell. Proteomics">
        <title>Proteogenomic analysis of Mycobacterium tuberculosis by high resolution mass spectrometry.</title>
        <authorList>
            <person name="Kelkar D.S."/>
            <person name="Kumar D."/>
            <person name="Kumar P."/>
            <person name="Balakrishnan L."/>
            <person name="Muthusamy B."/>
            <person name="Yadav A.K."/>
            <person name="Shrivastava P."/>
            <person name="Marimuthu A."/>
            <person name="Anand S."/>
            <person name="Sundaram H."/>
            <person name="Kingsbury R."/>
            <person name="Harsha H.C."/>
            <person name="Nair B."/>
            <person name="Prasad T.S."/>
            <person name="Chauhan D.S."/>
            <person name="Katoch K."/>
            <person name="Katoch V.M."/>
            <person name="Kumar P."/>
            <person name="Chaerkady R."/>
            <person name="Ramachandran S."/>
            <person name="Dash D."/>
            <person name="Pandey A."/>
        </authorList>
    </citation>
    <scope>IDENTIFICATION BY MASS SPECTROMETRY [LARGE SCALE ANALYSIS]</scope>
    <source>
        <strain>ATCC 25618 / H37Rv</strain>
    </source>
</reference>
<feature type="chain" id="PRO_0000148616" description="Argininosuccinate synthase">
    <location>
        <begin position="1"/>
        <end position="398"/>
    </location>
</feature>
<feature type="binding site" evidence="1">
    <location>
        <begin position="8"/>
        <end position="16"/>
    </location>
    <ligand>
        <name>ATP</name>
        <dbReference type="ChEBI" id="CHEBI:30616"/>
    </ligand>
</feature>
<feature type="binding site" evidence="1">
    <location>
        <position position="87"/>
    </location>
    <ligand>
        <name>L-citrulline</name>
        <dbReference type="ChEBI" id="CHEBI:57743"/>
    </ligand>
</feature>
<feature type="binding site" evidence="1">
    <location>
        <position position="117"/>
    </location>
    <ligand>
        <name>ATP</name>
        <dbReference type="ChEBI" id="CHEBI:30616"/>
    </ligand>
</feature>
<feature type="binding site" evidence="1">
    <location>
        <position position="119"/>
    </location>
    <ligand>
        <name>L-aspartate</name>
        <dbReference type="ChEBI" id="CHEBI:29991"/>
    </ligand>
</feature>
<feature type="binding site" evidence="1">
    <location>
        <position position="123"/>
    </location>
    <ligand>
        <name>L-aspartate</name>
        <dbReference type="ChEBI" id="CHEBI:29991"/>
    </ligand>
</feature>
<feature type="binding site" evidence="1">
    <location>
        <position position="123"/>
    </location>
    <ligand>
        <name>L-citrulline</name>
        <dbReference type="ChEBI" id="CHEBI:57743"/>
    </ligand>
</feature>
<feature type="binding site" evidence="1">
    <location>
        <position position="124"/>
    </location>
    <ligand>
        <name>L-aspartate</name>
        <dbReference type="ChEBI" id="CHEBI:29991"/>
    </ligand>
</feature>
<feature type="binding site" evidence="1">
    <location>
        <position position="127"/>
    </location>
    <ligand>
        <name>L-citrulline</name>
        <dbReference type="ChEBI" id="CHEBI:57743"/>
    </ligand>
</feature>
<feature type="binding site" evidence="1">
    <location>
        <position position="175"/>
    </location>
    <ligand>
        <name>L-citrulline</name>
        <dbReference type="ChEBI" id="CHEBI:57743"/>
    </ligand>
</feature>
<feature type="binding site" evidence="1">
    <location>
        <position position="260"/>
    </location>
    <ligand>
        <name>L-citrulline</name>
        <dbReference type="ChEBI" id="CHEBI:57743"/>
    </ligand>
</feature>
<feature type="binding site" evidence="1">
    <location>
        <position position="272"/>
    </location>
    <ligand>
        <name>L-citrulline</name>
        <dbReference type="ChEBI" id="CHEBI:57743"/>
    </ligand>
</feature>
<proteinExistence type="evidence at protein level"/>
<comment type="catalytic activity">
    <reaction evidence="1">
        <text>L-citrulline + L-aspartate + ATP = 2-(N(omega)-L-arginino)succinate + AMP + diphosphate + H(+)</text>
        <dbReference type="Rhea" id="RHEA:10932"/>
        <dbReference type="ChEBI" id="CHEBI:15378"/>
        <dbReference type="ChEBI" id="CHEBI:29991"/>
        <dbReference type="ChEBI" id="CHEBI:30616"/>
        <dbReference type="ChEBI" id="CHEBI:33019"/>
        <dbReference type="ChEBI" id="CHEBI:57472"/>
        <dbReference type="ChEBI" id="CHEBI:57743"/>
        <dbReference type="ChEBI" id="CHEBI:456215"/>
        <dbReference type="EC" id="6.3.4.5"/>
    </reaction>
</comment>
<comment type="pathway">
    <text evidence="1">Amino-acid biosynthesis; L-arginine biosynthesis; L-arginine from L-ornithine and carbamoyl phosphate: step 2/3.</text>
</comment>
<comment type="subunit">
    <text evidence="1">Homotetramer.</text>
</comment>
<comment type="subcellular location">
    <subcellularLocation>
        <location evidence="1">Cytoplasm</location>
    </subcellularLocation>
</comment>
<comment type="similarity">
    <text evidence="1">Belongs to the argininosuccinate synthase family. Type 1 subfamily.</text>
</comment>
<organism>
    <name type="scientific">Mycobacterium tuberculosis (strain ATCC 25618 / H37Rv)</name>
    <dbReference type="NCBI Taxonomy" id="83332"/>
    <lineage>
        <taxon>Bacteria</taxon>
        <taxon>Bacillati</taxon>
        <taxon>Actinomycetota</taxon>
        <taxon>Actinomycetes</taxon>
        <taxon>Mycobacteriales</taxon>
        <taxon>Mycobacteriaceae</taxon>
        <taxon>Mycobacterium</taxon>
        <taxon>Mycobacterium tuberculosis complex</taxon>
    </lineage>
</organism>
<evidence type="ECO:0000255" key="1">
    <source>
        <dbReference type="HAMAP-Rule" id="MF_00005"/>
    </source>
</evidence>